<keyword id="KW-0963">Cytoplasm</keyword>
<keyword id="KW-0206">Cytoskeleton</keyword>
<keyword id="KW-1185">Reference proteome</keyword>
<keyword id="KW-0677">Repeat</keyword>
<name>SHCBB_XENLA</name>
<organism>
    <name type="scientific">Xenopus laevis</name>
    <name type="common">African clawed frog</name>
    <dbReference type="NCBI Taxonomy" id="8355"/>
    <lineage>
        <taxon>Eukaryota</taxon>
        <taxon>Metazoa</taxon>
        <taxon>Chordata</taxon>
        <taxon>Craniata</taxon>
        <taxon>Vertebrata</taxon>
        <taxon>Euteleostomi</taxon>
        <taxon>Amphibia</taxon>
        <taxon>Batrachia</taxon>
        <taxon>Anura</taxon>
        <taxon>Pipoidea</taxon>
        <taxon>Pipidae</taxon>
        <taxon>Xenopodinae</taxon>
        <taxon>Xenopus</taxon>
        <taxon>Xenopus</taxon>
    </lineage>
</organism>
<dbReference type="EMBL" id="BC082676">
    <property type="protein sequence ID" value="AAH82676.1"/>
    <property type="molecule type" value="mRNA"/>
</dbReference>
<dbReference type="RefSeq" id="NP_001087996.1">
    <property type="nucleotide sequence ID" value="NM_001094527.1"/>
</dbReference>
<dbReference type="SMR" id="Q640F2"/>
<dbReference type="DNASU" id="494685"/>
<dbReference type="GeneID" id="494685"/>
<dbReference type="KEGG" id="xla:494685"/>
<dbReference type="AGR" id="Xenbase:XB-GENE-5807734"/>
<dbReference type="CTD" id="494685"/>
<dbReference type="Xenbase" id="XB-GENE-5807734">
    <property type="gene designation" value="shcbp1.L"/>
</dbReference>
<dbReference type="OrthoDB" id="5978115at2759"/>
<dbReference type="Proteomes" id="UP000186698">
    <property type="component" value="Chromosome 4L"/>
</dbReference>
<dbReference type="Bgee" id="494685">
    <property type="expression patterns" value="Expressed in egg cell and 19 other cell types or tissues"/>
</dbReference>
<dbReference type="GO" id="GO:0005737">
    <property type="term" value="C:cytoplasm"/>
    <property type="evidence" value="ECO:0007669"/>
    <property type="project" value="UniProtKB-KW"/>
</dbReference>
<dbReference type="GO" id="GO:0030496">
    <property type="term" value="C:midbody"/>
    <property type="evidence" value="ECO:0007669"/>
    <property type="project" value="UniProtKB-SubCell"/>
</dbReference>
<dbReference type="GO" id="GO:0005819">
    <property type="term" value="C:spindle"/>
    <property type="evidence" value="ECO:0007669"/>
    <property type="project" value="UniProtKB-SubCell"/>
</dbReference>
<dbReference type="GO" id="GO:0008543">
    <property type="term" value="P:fibroblast growth factor receptor signaling pathway"/>
    <property type="evidence" value="ECO:0000250"/>
    <property type="project" value="UniProtKB"/>
</dbReference>
<dbReference type="GO" id="GO:2000177">
    <property type="term" value="P:regulation of neural precursor cell proliferation"/>
    <property type="evidence" value="ECO:0000250"/>
    <property type="project" value="UniProtKB"/>
</dbReference>
<dbReference type="FunFam" id="2.160.20.10:FF:000081">
    <property type="entry name" value="SHC SH2 domain-binding protein 1 homolog A"/>
    <property type="match status" value="1"/>
</dbReference>
<dbReference type="Gene3D" id="2.160.20.10">
    <property type="entry name" value="Single-stranded right-handed beta-helix, Pectin lyase-like"/>
    <property type="match status" value="1"/>
</dbReference>
<dbReference type="InterPro" id="IPR039448">
    <property type="entry name" value="Beta_helix"/>
</dbReference>
<dbReference type="InterPro" id="IPR012334">
    <property type="entry name" value="Pectin_lyas_fold"/>
</dbReference>
<dbReference type="InterPro" id="IPR011050">
    <property type="entry name" value="Pectin_lyase_fold/virulence"/>
</dbReference>
<dbReference type="InterPro" id="IPR045140">
    <property type="entry name" value="SHCBP1-like"/>
</dbReference>
<dbReference type="PANTHER" id="PTHR14695:SF8">
    <property type="entry name" value="SHC SH2 DOMAIN-BINDING PROTEIN 1"/>
    <property type="match status" value="1"/>
</dbReference>
<dbReference type="PANTHER" id="PTHR14695">
    <property type="entry name" value="SHC SH2-DOMAIN BINDING PROTEIN 1-RELATED"/>
    <property type="match status" value="1"/>
</dbReference>
<dbReference type="Pfam" id="PF13229">
    <property type="entry name" value="Beta_helix"/>
    <property type="match status" value="1"/>
</dbReference>
<dbReference type="Pfam" id="PF23762">
    <property type="entry name" value="SHCBP_N"/>
    <property type="match status" value="1"/>
</dbReference>
<dbReference type="SUPFAM" id="SSF51126">
    <property type="entry name" value="Pectin lyase-like"/>
    <property type="match status" value="1"/>
</dbReference>
<gene>
    <name type="primary">shcbp1-b</name>
</gene>
<accession>Q640F2</accession>
<feature type="chain" id="PRO_0000076318" description="SHC SH2 domain-binding protein 1 homolog B">
    <location>
        <begin position="1"/>
        <end position="698"/>
    </location>
</feature>
<feature type="repeat" description="PbH1 1">
    <location>
        <begin position="480"/>
        <end position="502"/>
    </location>
</feature>
<feature type="repeat" description="PbH1 2">
    <location>
        <begin position="503"/>
        <end position="524"/>
    </location>
</feature>
<feature type="repeat" description="PbH1 3">
    <location>
        <begin position="532"/>
        <end position="554"/>
    </location>
</feature>
<evidence type="ECO:0000250" key="1">
    <source>
        <dbReference type="UniProtKB" id="Q8NEM2"/>
    </source>
</evidence>
<evidence type="ECO:0000250" key="2">
    <source>
        <dbReference type="UniProtKB" id="Q9Z179"/>
    </source>
</evidence>
<sequence length="698" mass="79593">MAEEEPLFPALQEEDDFFRINSDRCSEELQDVKQVLFQEEGDSGSDYGSFKRLGKVLPRTVRAGNMLFPDLFQTNNLLFYERFETYKDYMLGDCKPSEVKEFIAEYLEKALEPSGWKAIWHTDVFDVLVEVTDVEFSSLNAIVRLCEPFLCESRVSSITHESINDLLEVKDQRVPLQELRVVFDESGLYDQTALTIEHVRFFYQQIWRPWDEEEEDYFDYFVRCVEPRLRLHYDILEDRIPSGLVAEYRSLLLQSEAVYMQFTNLRNNLSNKDSDSEAELDNVSMVEGMKMDDEMENLKRKLKLIKNPLLRYLFCYQRNSGSYNMQAKGPRPTGGKVIHVVSTSMSITMLQCLTRERLQPECSNKDLEIQFHRDPLEAVNACYEGDLVIICPGLYTIYGLINIMDSIEIEGYGLPDDVIIEKKGKGDSFVDCNGAHVKISNVKFVQHEAVEGIITIHSGTTELDNCVLQCETTGVTVKKCAELLMKYSDLYGAKGAGMEIYPGSKCTLIGNGIHHCRDGILIKDFIDVVYEIPKIIMENNVIHNNEGYAVVLVKPSPNFEKNSHTEELEGEHLDNNMIEEQASSNVLQPNLNEAMGVEDNAIEKSDHLEEEKSDPTIAKEEVECEYAIDCEEAEGNQVIATELVANTRRKTQLHKKRLSTLGIVTADDNNLTSQEIFVSIVGNQFKRNGKGSFGTFLF</sequence>
<protein>
    <recommendedName>
        <fullName>SHC SH2 domain-binding protein 1 homolog B</fullName>
    </recommendedName>
</protein>
<comment type="function">
    <text evidence="2">May play a role in signaling pathways governing cellular proliferation.</text>
</comment>
<comment type="subcellular location">
    <subcellularLocation>
        <location evidence="1">Midbody</location>
    </subcellularLocation>
    <subcellularLocation>
        <location evidence="1">Cytoplasm</location>
        <location evidence="1">Cytoskeleton</location>
        <location evidence="1">Spindle</location>
    </subcellularLocation>
</comment>
<reference key="1">
    <citation type="submission" date="2004-09" db="EMBL/GenBank/DDBJ databases">
        <authorList>
            <consortium name="NIH - Xenopus Gene Collection (XGC) project"/>
        </authorList>
    </citation>
    <scope>NUCLEOTIDE SEQUENCE [LARGE SCALE MRNA]</scope>
    <source>
        <tissue>Oocyte</tissue>
    </source>
</reference>
<proteinExistence type="evidence at transcript level"/>